<sequence>MILACDVGLKRIGIAALLNGVILPLEAILRHNRNQASRDLSDLLREKNIQVLVVGKPHESYADTNARIEHFIKLVDFKGEIVFINEDRSSIEAYENLEHLGKKNKRLAIKDGRLDSLSACRILERYCQKVLKNH</sequence>
<protein>
    <recommendedName>
        <fullName evidence="1">Putative pre-16S rRNA nuclease</fullName>
        <ecNumber evidence="1">3.1.-.-</ecNumber>
    </recommendedName>
</protein>
<name>YQGF_HELPY</name>
<gene>
    <name type="ordered locus">HP_0334</name>
</gene>
<proteinExistence type="inferred from homology"/>
<accession>O25101</accession>
<organism>
    <name type="scientific">Helicobacter pylori (strain ATCC 700392 / 26695)</name>
    <name type="common">Campylobacter pylori</name>
    <dbReference type="NCBI Taxonomy" id="85962"/>
    <lineage>
        <taxon>Bacteria</taxon>
        <taxon>Pseudomonadati</taxon>
        <taxon>Campylobacterota</taxon>
        <taxon>Epsilonproteobacteria</taxon>
        <taxon>Campylobacterales</taxon>
        <taxon>Helicobacteraceae</taxon>
        <taxon>Helicobacter</taxon>
    </lineage>
</organism>
<comment type="function">
    <text evidence="1">Could be a nuclease involved in processing of the 5'-end of pre-16S rRNA.</text>
</comment>
<comment type="subcellular location">
    <subcellularLocation>
        <location evidence="1">Cytoplasm</location>
    </subcellularLocation>
</comment>
<comment type="similarity">
    <text evidence="1">Belongs to the YqgF nuclease family.</text>
</comment>
<keyword id="KW-0963">Cytoplasm</keyword>
<keyword id="KW-0378">Hydrolase</keyword>
<keyword id="KW-0540">Nuclease</keyword>
<keyword id="KW-1185">Reference proteome</keyword>
<keyword id="KW-0690">Ribosome biogenesis</keyword>
<reference key="1">
    <citation type="journal article" date="1997" name="Nature">
        <title>The complete genome sequence of the gastric pathogen Helicobacter pylori.</title>
        <authorList>
            <person name="Tomb J.-F."/>
            <person name="White O."/>
            <person name="Kerlavage A.R."/>
            <person name="Clayton R.A."/>
            <person name="Sutton G.G."/>
            <person name="Fleischmann R.D."/>
            <person name="Ketchum K.A."/>
            <person name="Klenk H.-P."/>
            <person name="Gill S.R."/>
            <person name="Dougherty B.A."/>
            <person name="Nelson K.E."/>
            <person name="Quackenbush J."/>
            <person name="Zhou L."/>
            <person name="Kirkness E.F."/>
            <person name="Peterson S.N."/>
            <person name="Loftus B.J."/>
            <person name="Richardson D.L."/>
            <person name="Dodson R.J."/>
            <person name="Khalak H.G."/>
            <person name="Glodek A."/>
            <person name="McKenney K."/>
            <person name="FitzGerald L.M."/>
            <person name="Lee N."/>
            <person name="Adams M.D."/>
            <person name="Hickey E.K."/>
            <person name="Berg D.E."/>
            <person name="Gocayne J.D."/>
            <person name="Utterback T.R."/>
            <person name="Peterson J.D."/>
            <person name="Kelley J.M."/>
            <person name="Cotton M.D."/>
            <person name="Weidman J.F."/>
            <person name="Fujii C."/>
            <person name="Bowman C."/>
            <person name="Watthey L."/>
            <person name="Wallin E."/>
            <person name="Hayes W.S."/>
            <person name="Borodovsky M."/>
            <person name="Karp P.D."/>
            <person name="Smith H.O."/>
            <person name="Fraser C.M."/>
            <person name="Venter J.C."/>
        </authorList>
    </citation>
    <scope>NUCLEOTIDE SEQUENCE [LARGE SCALE GENOMIC DNA]</scope>
    <source>
        <strain>ATCC 700392 / 26695</strain>
    </source>
</reference>
<feature type="chain" id="PRO_0000172073" description="Putative pre-16S rRNA nuclease">
    <location>
        <begin position="1"/>
        <end position="134"/>
    </location>
</feature>
<dbReference type="EC" id="3.1.-.-" evidence="1"/>
<dbReference type="EMBL" id="AE000511">
    <property type="protein sequence ID" value="AAD07403.1"/>
    <property type="molecule type" value="Genomic_DNA"/>
</dbReference>
<dbReference type="PIR" id="F64561">
    <property type="entry name" value="F64561"/>
</dbReference>
<dbReference type="RefSeq" id="NP_207132.1">
    <property type="nucleotide sequence ID" value="NC_000915.1"/>
</dbReference>
<dbReference type="SMR" id="O25101"/>
<dbReference type="FunCoup" id="O25101">
    <property type="interactions" value="247"/>
</dbReference>
<dbReference type="IntAct" id="O25101">
    <property type="interactions" value="1"/>
</dbReference>
<dbReference type="STRING" id="85962.HP_0334"/>
<dbReference type="PaxDb" id="85962-C694_01690"/>
<dbReference type="EnsemblBacteria" id="AAD07403">
    <property type="protein sequence ID" value="AAD07403"/>
    <property type="gene ID" value="HP_0334"/>
</dbReference>
<dbReference type="KEGG" id="heo:C694_01690"/>
<dbReference type="KEGG" id="hpy:HP_0334"/>
<dbReference type="PATRIC" id="fig|85962.47.peg.356"/>
<dbReference type="eggNOG" id="COG0816">
    <property type="taxonomic scope" value="Bacteria"/>
</dbReference>
<dbReference type="InParanoid" id="O25101"/>
<dbReference type="OrthoDB" id="9796140at2"/>
<dbReference type="Proteomes" id="UP000000429">
    <property type="component" value="Chromosome"/>
</dbReference>
<dbReference type="GO" id="GO:0005737">
    <property type="term" value="C:cytoplasm"/>
    <property type="evidence" value="ECO:0007669"/>
    <property type="project" value="UniProtKB-SubCell"/>
</dbReference>
<dbReference type="GO" id="GO:0004518">
    <property type="term" value="F:nuclease activity"/>
    <property type="evidence" value="ECO:0007669"/>
    <property type="project" value="UniProtKB-KW"/>
</dbReference>
<dbReference type="GO" id="GO:0000967">
    <property type="term" value="P:rRNA 5'-end processing"/>
    <property type="evidence" value="ECO:0000318"/>
    <property type="project" value="GO_Central"/>
</dbReference>
<dbReference type="CDD" id="cd16964">
    <property type="entry name" value="YqgF"/>
    <property type="match status" value="1"/>
</dbReference>
<dbReference type="FunFam" id="3.30.420.140:FF:000013">
    <property type="entry name" value="Putative pre-16S rRNA nuclease"/>
    <property type="match status" value="1"/>
</dbReference>
<dbReference type="Gene3D" id="3.30.420.140">
    <property type="entry name" value="YqgF/RNase H-like domain"/>
    <property type="match status" value="1"/>
</dbReference>
<dbReference type="HAMAP" id="MF_00651">
    <property type="entry name" value="Nuclease_YqgF"/>
    <property type="match status" value="1"/>
</dbReference>
<dbReference type="InterPro" id="IPR012337">
    <property type="entry name" value="RNaseH-like_sf"/>
</dbReference>
<dbReference type="InterPro" id="IPR005227">
    <property type="entry name" value="YqgF"/>
</dbReference>
<dbReference type="InterPro" id="IPR006641">
    <property type="entry name" value="YqgF/RNaseH-like_dom"/>
</dbReference>
<dbReference type="InterPro" id="IPR037027">
    <property type="entry name" value="YqgF/RNaseH-like_dom_sf"/>
</dbReference>
<dbReference type="NCBIfam" id="NF001026">
    <property type="entry name" value="PRK00109.2-2"/>
    <property type="match status" value="1"/>
</dbReference>
<dbReference type="NCBIfam" id="TIGR00250">
    <property type="entry name" value="RNAse_H_YqgF"/>
    <property type="match status" value="1"/>
</dbReference>
<dbReference type="PANTHER" id="PTHR33317">
    <property type="entry name" value="POLYNUCLEOTIDYL TRANSFERASE, RIBONUCLEASE H-LIKE SUPERFAMILY PROTEIN"/>
    <property type="match status" value="1"/>
</dbReference>
<dbReference type="PANTHER" id="PTHR33317:SF4">
    <property type="entry name" value="POLYNUCLEOTIDYL TRANSFERASE, RIBONUCLEASE H-LIKE SUPERFAMILY PROTEIN"/>
    <property type="match status" value="1"/>
</dbReference>
<dbReference type="Pfam" id="PF03652">
    <property type="entry name" value="RuvX"/>
    <property type="match status" value="1"/>
</dbReference>
<dbReference type="SMART" id="SM00732">
    <property type="entry name" value="YqgFc"/>
    <property type="match status" value="1"/>
</dbReference>
<dbReference type="SUPFAM" id="SSF53098">
    <property type="entry name" value="Ribonuclease H-like"/>
    <property type="match status" value="1"/>
</dbReference>
<evidence type="ECO:0000255" key="1">
    <source>
        <dbReference type="HAMAP-Rule" id="MF_00651"/>
    </source>
</evidence>